<protein>
    <recommendedName>
        <fullName evidence="1">Type II restriction enzyme HhaII</fullName>
        <shortName>R.HhaII</shortName>
        <ecNumber>3.1.21.4</ecNumber>
    </recommendedName>
    <alternativeName>
        <fullName>Endonuclease HhaII</fullName>
    </alternativeName>
    <alternativeName>
        <fullName>Type-2 restriction enzyme HhaII</fullName>
    </alternativeName>
</protein>
<comment type="function">
    <text evidence="1">A P subtype restriction enzyme that recognizes the double-stranded sequence 5'-GANTC-3' and cleaves after G-1.</text>
</comment>
<comment type="catalytic activity">
    <reaction>
        <text>Endonucleolytic cleavage of DNA to give specific double-stranded fragments with terminal 5'-phosphates.</text>
        <dbReference type="EC" id="3.1.21.4"/>
    </reaction>
</comment>
<comment type="subunit">
    <text>Homodimer.</text>
</comment>
<comment type="caution">
    <text evidence="2">Strain ATCC 10014 was originally thought to originate from H.haemolyticus.</text>
</comment>
<gene>
    <name type="primary">hhaIIR</name>
</gene>
<organism>
    <name type="scientific">Haemophilus parahaemolyticus</name>
    <dbReference type="NCBI Taxonomy" id="735"/>
    <lineage>
        <taxon>Bacteria</taxon>
        <taxon>Pseudomonadati</taxon>
        <taxon>Pseudomonadota</taxon>
        <taxon>Gammaproteobacteria</taxon>
        <taxon>Pasteurellales</taxon>
        <taxon>Pasteurellaceae</taxon>
        <taxon>Haemophilus</taxon>
    </lineage>
</organism>
<feature type="chain" id="PRO_0000077318" description="Type II restriction enzyme HhaII">
    <location>
        <begin position="1"/>
        <end position="227"/>
    </location>
</feature>
<reference key="1">
    <citation type="journal article" date="1983" name="Gene">
        <title>The nucleotide sequence of the HhaII restriction and modification genes from Haemophilus haemolyticus.</title>
        <authorList>
            <person name="Schoner B."/>
            <person name="Kelly S."/>
            <person name="Smith H.O."/>
        </authorList>
    </citation>
    <scope>NUCLEOTIDE SEQUENCE [GENOMIC DNA]</scope>
    <source>
        <strain>ATCC 10014 / CCUG 3716 / NCTC 8479 / 536</strain>
    </source>
</reference>
<reference key="2">
    <citation type="journal article" date="1988" name="Gene">
        <title>Overproduction and purification of the M.HhaII methyltransferase from Haemophilus haemolyticus.</title>
        <authorList>
            <person name="Chandrasegaran S."/>
            <person name="Wu L.P."/>
            <person name="Valda E."/>
            <person name="Smith H.O."/>
        </authorList>
    </citation>
    <scope>NUCLEOTIDE SEQUENCE [GENOMIC DNA] OF 1-9</scope>
    <source>
        <strain>ATCC 10014 / CCUG 3716 / NCTC 8479 / 536</strain>
    </source>
</reference>
<reference key="3">
    <citation type="journal article" date="2003" name="Nucleic Acids Res.">
        <title>A nomenclature for restriction enzymes, DNA methyltransferases, homing endonucleases and their genes.</title>
        <authorList>
            <person name="Roberts R.J."/>
            <person name="Belfort M."/>
            <person name="Bestor T."/>
            <person name="Bhagwat A.S."/>
            <person name="Bickle T.A."/>
            <person name="Bitinaite J."/>
            <person name="Blumenthal R.M."/>
            <person name="Degtyarev S.K."/>
            <person name="Dryden D.T."/>
            <person name="Dybvig K."/>
            <person name="Firman K."/>
            <person name="Gromova E.S."/>
            <person name="Gumport R.I."/>
            <person name="Halford S.E."/>
            <person name="Hattman S."/>
            <person name="Heitman J."/>
            <person name="Hornby D.P."/>
            <person name="Janulaitis A."/>
            <person name="Jeltsch A."/>
            <person name="Josephsen J."/>
            <person name="Kiss A."/>
            <person name="Klaenhammer T.R."/>
            <person name="Kobayashi I."/>
            <person name="Kong H."/>
            <person name="Krueger D.H."/>
            <person name="Lacks S."/>
            <person name="Marinus M.G."/>
            <person name="Miyahara M."/>
            <person name="Morgan R.D."/>
            <person name="Murray N.E."/>
            <person name="Nagaraja V."/>
            <person name="Piekarowicz A."/>
            <person name="Pingoud A."/>
            <person name="Raleigh E."/>
            <person name="Rao D.N."/>
            <person name="Reich N."/>
            <person name="Repin V.E."/>
            <person name="Selker E.U."/>
            <person name="Shaw P.C."/>
            <person name="Stein D.C."/>
            <person name="Stoddard B.L."/>
            <person name="Szybalski W."/>
            <person name="Trautner T.A."/>
            <person name="Van Etten J.L."/>
            <person name="Vitor J.M."/>
            <person name="Wilson G.G."/>
            <person name="Xu S.Y."/>
        </authorList>
    </citation>
    <scope>NOMENCLATURE</scope>
    <scope>SUBTYPE</scope>
</reference>
<proteinExistence type="predicted"/>
<dbReference type="EC" id="3.1.21.4"/>
<dbReference type="EMBL" id="K00508">
    <property type="status" value="NOT_ANNOTATED_CDS"/>
    <property type="molecule type" value="Genomic_DNA"/>
</dbReference>
<dbReference type="EMBL" id="M24624">
    <property type="protein sequence ID" value="AAA24964.1"/>
    <property type="molecule type" value="Genomic_DNA"/>
</dbReference>
<dbReference type="PIR" id="A00788">
    <property type="entry name" value="NDHIH2"/>
</dbReference>
<dbReference type="RefSeq" id="WP_005707040.1">
    <property type="nucleotide sequence ID" value="NZ_MUXY01000022.1"/>
</dbReference>
<dbReference type="STRING" id="735.B0185_09585"/>
<dbReference type="BRENDA" id="3.1.21.4">
    <property type="organism ID" value="2531"/>
</dbReference>
<dbReference type="PRO" id="PR:P00643"/>
<dbReference type="GO" id="GO:0009036">
    <property type="term" value="F:type II site-specific deoxyribonuclease activity"/>
    <property type="evidence" value="ECO:0007669"/>
    <property type="project" value="UniProtKB-EC"/>
</dbReference>
<dbReference type="GO" id="GO:0009307">
    <property type="term" value="P:DNA restriction-modification system"/>
    <property type="evidence" value="ECO:0007669"/>
    <property type="project" value="UniProtKB-KW"/>
</dbReference>
<sequence length="227" mass="25910">MSKISNALGRKDGNSGYTRVVGNAELGQLLSRVQATVISNGNELERLITQRCNLIENIDVFIEDTTRGNNVQNGVYLCLKKTFKKSKKYAESVKGIEPDMLIFIVESYRVCKVIELKDGDAFDTKKSQGEKEHLEKFATLFGAKIPFVTDYYICSFNQNDKKLIMAGFKGVFSLEHILTGKELCQILGISYQEILDIRRRDTEENFAYLIAEMMKIPEVREEVKKHF</sequence>
<evidence type="ECO:0000303" key="1">
    <source>
    </source>
</evidence>
<evidence type="ECO:0000305" key="2"/>
<accession>P00643</accession>
<name>T2H2_HAEPH</name>
<keyword id="KW-0255">Endonuclease</keyword>
<keyword id="KW-0378">Hydrolase</keyword>
<keyword id="KW-0540">Nuclease</keyword>
<keyword id="KW-0680">Restriction system</keyword>